<name>MATK_ROSRU</name>
<sequence length="503" mass="59781">MEEFQGYLELYRSQQHDFLYPLIFREYIYALAHDRGLNRSVLLDNVGYDKKSSLLIIKRLISRMYQQNHFLISVNDSNQNKFFGYNKNLYSQIISEGFAVIVEIPFSLRLVSSLKETETVKSYNLRSIHSIFPFFEDKFPHLNYASDVLIPYPIHLEILVQTLRYCVKDPSSLHLLRLFLHEYYNWNTLITPKKSIFAKSNQRLFLLLYNSYVCEYESILLFLRNQSNHLRLTSFGILFERIRFYEKIKYPVEEVFANDFPATLWFFKDPFIQYVRYQGKSILASKDTPLLMNKWKYYLVHFWQCHFYVWFQPGRIHINQLSKHSFDFLGYLSSIRPNISVVRSQLLENSFLMDNAMKKLDTLFPIIPMIGSLAKVKFCNTSGHPISKSSWADSSDSDIIDRFVRIGGNLSHYYSGSSKKKSLYRIKYILRLSCVKTLARKHKSTVRTFLKRLGPKLLDEFFTEEEQIFSLLFPRTSSTLKRFYRGRIWYLDILCINDLVNHE</sequence>
<reference key="1">
    <citation type="journal article" date="1998" name="Sci. Hortic.">
        <title>Phylogenetic analyses of the genus Rosa using the matK sequence: molecular evidence for the narrow genetic background of modern roses.</title>
        <authorList>
            <person name="Matsumoto S."/>
            <person name="Kouchi M."/>
            <person name="Yabuki J."/>
            <person name="Kusunoki M."/>
            <person name="Ueda Y."/>
            <person name="Fukui H."/>
        </authorList>
    </citation>
    <scope>NUCLEOTIDE SEQUENCE [GENOMIC DNA]</scope>
    <source>
        <tissue>Leaf</tissue>
    </source>
</reference>
<feature type="chain" id="PRO_0000143691" description="Maturase K">
    <location>
        <begin position="1"/>
        <end position="503"/>
    </location>
</feature>
<proteinExistence type="inferred from homology"/>
<keyword id="KW-0150">Chloroplast</keyword>
<keyword id="KW-0507">mRNA processing</keyword>
<keyword id="KW-0934">Plastid</keyword>
<keyword id="KW-0694">RNA-binding</keyword>
<keyword id="KW-0819">tRNA processing</keyword>
<protein>
    <recommendedName>
        <fullName evidence="1">Maturase K</fullName>
    </recommendedName>
    <alternativeName>
        <fullName evidence="1">Intron maturase</fullName>
    </alternativeName>
</protein>
<accession>O78253</accession>
<gene>
    <name evidence="1" type="primary">matK</name>
</gene>
<dbReference type="EMBL" id="AB011989">
    <property type="protein sequence ID" value="BAA32764.1"/>
    <property type="molecule type" value="Genomic_DNA"/>
</dbReference>
<dbReference type="RefSeq" id="YP_009679871.1">
    <property type="nucleotide sequence ID" value="NC_044094.1"/>
</dbReference>
<dbReference type="GeneID" id="41041387"/>
<dbReference type="GO" id="GO:0009507">
    <property type="term" value="C:chloroplast"/>
    <property type="evidence" value="ECO:0007669"/>
    <property type="project" value="UniProtKB-SubCell"/>
</dbReference>
<dbReference type="GO" id="GO:0003723">
    <property type="term" value="F:RNA binding"/>
    <property type="evidence" value="ECO:0007669"/>
    <property type="project" value="UniProtKB-KW"/>
</dbReference>
<dbReference type="GO" id="GO:0006397">
    <property type="term" value="P:mRNA processing"/>
    <property type="evidence" value="ECO:0007669"/>
    <property type="project" value="UniProtKB-KW"/>
</dbReference>
<dbReference type="GO" id="GO:0008380">
    <property type="term" value="P:RNA splicing"/>
    <property type="evidence" value="ECO:0007669"/>
    <property type="project" value="UniProtKB-UniRule"/>
</dbReference>
<dbReference type="GO" id="GO:0008033">
    <property type="term" value="P:tRNA processing"/>
    <property type="evidence" value="ECO:0007669"/>
    <property type="project" value="UniProtKB-KW"/>
</dbReference>
<dbReference type="HAMAP" id="MF_01390">
    <property type="entry name" value="MatK"/>
    <property type="match status" value="1"/>
</dbReference>
<dbReference type="InterPro" id="IPR024937">
    <property type="entry name" value="Domain_X"/>
</dbReference>
<dbReference type="InterPro" id="IPR002866">
    <property type="entry name" value="Maturase_MatK"/>
</dbReference>
<dbReference type="InterPro" id="IPR024942">
    <property type="entry name" value="Maturase_MatK_N"/>
</dbReference>
<dbReference type="PANTHER" id="PTHR34811">
    <property type="entry name" value="MATURASE K"/>
    <property type="match status" value="1"/>
</dbReference>
<dbReference type="PANTHER" id="PTHR34811:SF1">
    <property type="entry name" value="MATURASE K"/>
    <property type="match status" value="1"/>
</dbReference>
<dbReference type="Pfam" id="PF01348">
    <property type="entry name" value="Intron_maturas2"/>
    <property type="match status" value="1"/>
</dbReference>
<dbReference type="Pfam" id="PF01824">
    <property type="entry name" value="MatK_N"/>
    <property type="match status" value="1"/>
</dbReference>
<evidence type="ECO:0000255" key="1">
    <source>
        <dbReference type="HAMAP-Rule" id="MF_01390"/>
    </source>
</evidence>
<comment type="function">
    <text evidence="1">Usually encoded in the trnK tRNA gene intron. Probably assists in splicing its own and other chloroplast group II introns.</text>
</comment>
<comment type="subcellular location">
    <subcellularLocation>
        <location>Plastid</location>
        <location>Chloroplast</location>
    </subcellularLocation>
</comment>
<comment type="similarity">
    <text evidence="1">Belongs to the intron maturase 2 family. MatK subfamily.</text>
</comment>
<organism>
    <name type="scientific">Rosa rugosa</name>
    <name type="common">Rugosa rose</name>
    <dbReference type="NCBI Taxonomy" id="74645"/>
    <lineage>
        <taxon>Eukaryota</taxon>
        <taxon>Viridiplantae</taxon>
        <taxon>Streptophyta</taxon>
        <taxon>Embryophyta</taxon>
        <taxon>Tracheophyta</taxon>
        <taxon>Spermatophyta</taxon>
        <taxon>Magnoliopsida</taxon>
        <taxon>eudicotyledons</taxon>
        <taxon>Gunneridae</taxon>
        <taxon>Pentapetalae</taxon>
        <taxon>rosids</taxon>
        <taxon>fabids</taxon>
        <taxon>Rosales</taxon>
        <taxon>Rosaceae</taxon>
        <taxon>Rosoideae</taxon>
        <taxon>Rosoideae incertae sedis</taxon>
        <taxon>Rosa</taxon>
    </lineage>
</organism>
<geneLocation type="chloroplast"/>